<gene>
    <name evidence="1" type="primary">truA</name>
    <name type="ordered locus">LEPBI_I0549</name>
</gene>
<organism>
    <name type="scientific">Leptospira biflexa serovar Patoc (strain Patoc 1 / ATCC 23582 / Paris)</name>
    <dbReference type="NCBI Taxonomy" id="456481"/>
    <lineage>
        <taxon>Bacteria</taxon>
        <taxon>Pseudomonadati</taxon>
        <taxon>Spirochaetota</taxon>
        <taxon>Spirochaetia</taxon>
        <taxon>Leptospirales</taxon>
        <taxon>Leptospiraceae</taxon>
        <taxon>Leptospira</taxon>
    </lineage>
</organism>
<reference key="1">
    <citation type="journal article" date="2008" name="PLoS ONE">
        <title>Genome sequence of the saprophyte Leptospira biflexa provides insights into the evolution of Leptospira and the pathogenesis of leptospirosis.</title>
        <authorList>
            <person name="Picardeau M."/>
            <person name="Bulach D.M."/>
            <person name="Bouchier C."/>
            <person name="Zuerner R.L."/>
            <person name="Zidane N."/>
            <person name="Wilson P.J."/>
            <person name="Creno S."/>
            <person name="Kuczek E.S."/>
            <person name="Bommezzadri S."/>
            <person name="Davis J.C."/>
            <person name="McGrath A."/>
            <person name="Johnson M.J."/>
            <person name="Boursaux-Eude C."/>
            <person name="Seemann T."/>
            <person name="Rouy Z."/>
            <person name="Coppel R.L."/>
            <person name="Rood J.I."/>
            <person name="Lajus A."/>
            <person name="Davies J.K."/>
            <person name="Medigue C."/>
            <person name="Adler B."/>
        </authorList>
    </citation>
    <scope>NUCLEOTIDE SEQUENCE [LARGE SCALE GENOMIC DNA]</scope>
    <source>
        <strain>Patoc 1 / ATCC 23582 / Paris</strain>
    </source>
</reference>
<proteinExistence type="inferred from homology"/>
<name>TRUA_LEPBP</name>
<comment type="function">
    <text evidence="1">Formation of pseudouridine at positions 38, 39 and 40 in the anticodon stem and loop of transfer RNAs.</text>
</comment>
<comment type="catalytic activity">
    <reaction evidence="1">
        <text>uridine(38/39/40) in tRNA = pseudouridine(38/39/40) in tRNA</text>
        <dbReference type="Rhea" id="RHEA:22376"/>
        <dbReference type="Rhea" id="RHEA-COMP:10085"/>
        <dbReference type="Rhea" id="RHEA-COMP:10087"/>
        <dbReference type="ChEBI" id="CHEBI:65314"/>
        <dbReference type="ChEBI" id="CHEBI:65315"/>
        <dbReference type="EC" id="5.4.99.12"/>
    </reaction>
</comment>
<comment type="subunit">
    <text evidence="1">Homodimer.</text>
</comment>
<comment type="similarity">
    <text evidence="1">Belongs to the tRNA pseudouridine synthase TruA family.</text>
</comment>
<accession>B0SJC4</accession>
<dbReference type="EC" id="5.4.99.12" evidence="1"/>
<dbReference type="EMBL" id="CP000786">
    <property type="protein sequence ID" value="ABZ96687.1"/>
    <property type="molecule type" value="Genomic_DNA"/>
</dbReference>
<dbReference type="RefSeq" id="WP_012387574.1">
    <property type="nucleotide sequence ID" value="NC_010602.1"/>
</dbReference>
<dbReference type="SMR" id="B0SJC4"/>
<dbReference type="STRING" id="456481.LEPBI_I0549"/>
<dbReference type="KEGG" id="lbi:LEPBI_I0549"/>
<dbReference type="HOGENOM" id="CLU_014673_0_1_12"/>
<dbReference type="OrthoDB" id="9811823at2"/>
<dbReference type="BioCyc" id="LBIF456481:LEPBI_RS02695-MONOMER"/>
<dbReference type="Proteomes" id="UP000001847">
    <property type="component" value="Chromosome I"/>
</dbReference>
<dbReference type="GO" id="GO:0003723">
    <property type="term" value="F:RNA binding"/>
    <property type="evidence" value="ECO:0007669"/>
    <property type="project" value="InterPro"/>
</dbReference>
<dbReference type="GO" id="GO:0160147">
    <property type="term" value="F:tRNA pseudouridine(38-40) synthase activity"/>
    <property type="evidence" value="ECO:0007669"/>
    <property type="project" value="UniProtKB-EC"/>
</dbReference>
<dbReference type="GO" id="GO:0031119">
    <property type="term" value="P:tRNA pseudouridine synthesis"/>
    <property type="evidence" value="ECO:0007669"/>
    <property type="project" value="UniProtKB-UniRule"/>
</dbReference>
<dbReference type="CDD" id="cd02570">
    <property type="entry name" value="PseudoU_synth_EcTruA"/>
    <property type="match status" value="1"/>
</dbReference>
<dbReference type="FunFam" id="3.30.70.580:FF:000001">
    <property type="entry name" value="tRNA pseudouridine synthase A"/>
    <property type="match status" value="1"/>
</dbReference>
<dbReference type="Gene3D" id="3.30.70.660">
    <property type="entry name" value="Pseudouridine synthase I, catalytic domain, C-terminal subdomain"/>
    <property type="match status" value="1"/>
</dbReference>
<dbReference type="Gene3D" id="3.30.70.580">
    <property type="entry name" value="Pseudouridine synthase I, catalytic domain, N-terminal subdomain"/>
    <property type="match status" value="1"/>
</dbReference>
<dbReference type="HAMAP" id="MF_00171">
    <property type="entry name" value="TruA"/>
    <property type="match status" value="1"/>
</dbReference>
<dbReference type="InterPro" id="IPR020103">
    <property type="entry name" value="PsdUridine_synth_cat_dom_sf"/>
</dbReference>
<dbReference type="InterPro" id="IPR001406">
    <property type="entry name" value="PsdUridine_synth_TruA"/>
</dbReference>
<dbReference type="InterPro" id="IPR020097">
    <property type="entry name" value="PsdUridine_synth_TruA_a/b_dom"/>
</dbReference>
<dbReference type="InterPro" id="IPR020095">
    <property type="entry name" value="PsdUridine_synth_TruA_C"/>
</dbReference>
<dbReference type="InterPro" id="IPR020094">
    <property type="entry name" value="TruA/RsuA/RluB/E/F_N"/>
</dbReference>
<dbReference type="NCBIfam" id="TIGR00071">
    <property type="entry name" value="hisT_truA"/>
    <property type="match status" value="1"/>
</dbReference>
<dbReference type="PANTHER" id="PTHR11142">
    <property type="entry name" value="PSEUDOURIDYLATE SYNTHASE"/>
    <property type="match status" value="1"/>
</dbReference>
<dbReference type="PANTHER" id="PTHR11142:SF0">
    <property type="entry name" value="TRNA PSEUDOURIDINE SYNTHASE-LIKE 1"/>
    <property type="match status" value="1"/>
</dbReference>
<dbReference type="Pfam" id="PF01416">
    <property type="entry name" value="PseudoU_synth_1"/>
    <property type="match status" value="2"/>
</dbReference>
<dbReference type="PIRSF" id="PIRSF001430">
    <property type="entry name" value="tRNA_psdUrid_synth"/>
    <property type="match status" value="1"/>
</dbReference>
<dbReference type="SUPFAM" id="SSF55120">
    <property type="entry name" value="Pseudouridine synthase"/>
    <property type="match status" value="1"/>
</dbReference>
<keyword id="KW-0413">Isomerase</keyword>
<keyword id="KW-1185">Reference proteome</keyword>
<keyword id="KW-0819">tRNA processing</keyword>
<protein>
    <recommendedName>
        <fullName evidence="1">tRNA pseudouridine synthase A</fullName>
        <ecNumber evidence="1">5.4.99.12</ecNumber>
    </recommendedName>
    <alternativeName>
        <fullName evidence="1">tRNA pseudouridine(38-40) synthase</fullName>
    </alternativeName>
    <alternativeName>
        <fullName evidence="1">tRNA pseudouridylate synthase I</fullName>
    </alternativeName>
    <alternativeName>
        <fullName evidence="1">tRNA-uridine isomerase I</fullName>
    </alternativeName>
</protein>
<evidence type="ECO:0000255" key="1">
    <source>
        <dbReference type="HAMAP-Rule" id="MF_00171"/>
    </source>
</evidence>
<sequence length="264" mass="30213">MPNYALLVEYDGTHFNGWQKQKNLPTVQSSIESALGIILRRNPASRLSVAGRTDTGVHALGMVCNFKTEHPIPNFHKLLVSLNALTPTGVSVKNVVEVPSDFHARFSCTGREYIYKLYYSKYESSFVEGRAFWVKGHIDWERVKKQLQVLVGEKDFRSFTKAKSMAGKRAVREILAIQLENLSPEWYQIRIRANGFMHNMVRITVGTLLDIGKGRWESRSIDSILEEKNRTQAGVTLPPDGLYFVRAYYEDHPEIHELYKIPLP</sequence>
<feature type="chain" id="PRO_1000097756" description="tRNA pseudouridine synthase A">
    <location>
        <begin position="1"/>
        <end position="264"/>
    </location>
</feature>
<feature type="active site" description="Nucleophile" evidence="1">
    <location>
        <position position="54"/>
    </location>
</feature>
<feature type="binding site" evidence="1">
    <location>
        <position position="113"/>
    </location>
    <ligand>
        <name>substrate</name>
    </ligand>
</feature>